<dbReference type="EMBL" id="LT708304">
    <property type="protein sequence ID" value="SIT99643.1"/>
    <property type="molecule type" value="Genomic_DNA"/>
</dbReference>
<dbReference type="RefSeq" id="NP_854700.1">
    <property type="nucleotide sequence ID" value="NC_002945.3"/>
</dbReference>
<dbReference type="SMR" id="Q7U0V0"/>
<dbReference type="KEGG" id="mbo:BQ2027_MB1044C"/>
<dbReference type="PATRIC" id="fig|233413.5.peg.1134"/>
<dbReference type="Proteomes" id="UP000001419">
    <property type="component" value="Chromosome"/>
</dbReference>
<dbReference type="GO" id="GO:0005886">
    <property type="term" value="C:plasma membrane"/>
    <property type="evidence" value="ECO:0007669"/>
    <property type="project" value="UniProtKB-SubCell"/>
</dbReference>
<dbReference type="Gene3D" id="3.40.1000.10">
    <property type="entry name" value="Mog1/PsbP, alpha/beta/alpha sandwich"/>
    <property type="match status" value="1"/>
</dbReference>
<dbReference type="InterPro" id="IPR019674">
    <property type="entry name" value="Lipoprotein_LpqN/LpqT-like"/>
</dbReference>
<dbReference type="Pfam" id="PF10738">
    <property type="entry name" value="Lpp-LpqN"/>
    <property type="match status" value="1"/>
</dbReference>
<dbReference type="PROSITE" id="PS51257">
    <property type="entry name" value="PROKAR_LIPOPROTEIN"/>
    <property type="match status" value="1"/>
</dbReference>
<gene>
    <name type="primary">lpqT</name>
    <name type="ordered locus">BQ2027_MB1044C</name>
</gene>
<accession>Q7U0V0</accession>
<accession>A0A1R3XY34</accession>
<accession>X2BGW0</accession>
<proteinExistence type="inferred from homology"/>
<feature type="signal peptide" evidence="1">
    <location>
        <begin position="1"/>
        <end position="29"/>
    </location>
</feature>
<feature type="chain" id="PRO_0000018129" description="Putative lipoprotein LpqT">
    <location>
        <begin position="30"/>
        <end position="252"/>
    </location>
</feature>
<feature type="region of interest" description="Disordered" evidence="2">
    <location>
        <begin position="191"/>
        <end position="217"/>
    </location>
</feature>
<feature type="compositionally biased region" description="Basic residues" evidence="2">
    <location>
        <begin position="206"/>
        <end position="217"/>
    </location>
</feature>
<feature type="lipid moiety-binding region" description="N-palmitoyl cysteine" evidence="1">
    <location>
        <position position="30"/>
    </location>
</feature>
<feature type="lipid moiety-binding region" description="S-diacylglycerol cysteine" evidence="1">
    <location>
        <position position="30"/>
    </location>
</feature>
<keyword id="KW-1003">Cell membrane</keyword>
<keyword id="KW-0449">Lipoprotein</keyword>
<keyword id="KW-0472">Membrane</keyword>
<keyword id="KW-0564">Palmitate</keyword>
<keyword id="KW-1185">Reference proteome</keyword>
<keyword id="KW-0732">Signal</keyword>
<organism>
    <name type="scientific">Mycobacterium bovis (strain ATCC BAA-935 / AF2122/97)</name>
    <dbReference type="NCBI Taxonomy" id="233413"/>
    <lineage>
        <taxon>Bacteria</taxon>
        <taxon>Bacillati</taxon>
        <taxon>Actinomycetota</taxon>
        <taxon>Actinomycetes</taxon>
        <taxon>Mycobacteriales</taxon>
        <taxon>Mycobacteriaceae</taxon>
        <taxon>Mycobacterium</taxon>
        <taxon>Mycobacterium tuberculosis complex</taxon>
    </lineage>
</organism>
<name>LPQT_MYCBO</name>
<evidence type="ECO:0000255" key="1">
    <source>
        <dbReference type="PROSITE-ProRule" id="PRU00303"/>
    </source>
</evidence>
<evidence type="ECO:0000256" key="2">
    <source>
        <dbReference type="SAM" id="MobiDB-lite"/>
    </source>
</evidence>
<sequence length="252" mass="27246">MAGRRCPQDSVRPLAVAVAVATLAMSAVACGPKSPDFQSILSTSPTTSAVSTTTEVPVPLWKYLESVGVTGEPVAPSSLTDLTVSIPTPPGWAPMKNPNITPNTEMIAKGESYPTAMLMVFKLHRDFDIAEALKHGTADARLSTNFTELDSSTADFNGFPSSMIQGSYDLHGRRLHTWNRIVFPTGAGQAALPGAAHHHESGQRGRQARFRHRGDHRRIRRRGKVIVRTVGAQLSEQLTRIEFPQCSSHGLA</sequence>
<protein>
    <recommendedName>
        <fullName>Putative lipoprotein LpqT</fullName>
    </recommendedName>
</protein>
<reference key="1">
    <citation type="journal article" date="2003" name="Proc. Natl. Acad. Sci. U.S.A.">
        <title>The complete genome sequence of Mycobacterium bovis.</title>
        <authorList>
            <person name="Garnier T."/>
            <person name="Eiglmeier K."/>
            <person name="Camus J.-C."/>
            <person name="Medina N."/>
            <person name="Mansoor H."/>
            <person name="Pryor M."/>
            <person name="Duthoy S."/>
            <person name="Grondin S."/>
            <person name="Lacroix C."/>
            <person name="Monsempe C."/>
            <person name="Simon S."/>
            <person name="Harris B."/>
            <person name="Atkin R."/>
            <person name="Doggett J."/>
            <person name="Mayes R."/>
            <person name="Keating L."/>
            <person name="Wheeler P.R."/>
            <person name="Parkhill J."/>
            <person name="Barrell B.G."/>
            <person name="Cole S.T."/>
            <person name="Gordon S.V."/>
            <person name="Hewinson R.G."/>
        </authorList>
    </citation>
    <scope>NUCLEOTIDE SEQUENCE [LARGE SCALE GENOMIC DNA]</scope>
    <source>
        <strain>ATCC BAA-935 / AF2122/97</strain>
    </source>
</reference>
<reference key="2">
    <citation type="journal article" date="2017" name="Genome Announc.">
        <title>Updated reference genome sequence and annotation of Mycobacterium bovis AF2122/97.</title>
        <authorList>
            <person name="Malone K.M."/>
            <person name="Farrell D."/>
            <person name="Stuber T.P."/>
            <person name="Schubert O.T."/>
            <person name="Aebersold R."/>
            <person name="Robbe-Austerman S."/>
            <person name="Gordon S.V."/>
        </authorList>
    </citation>
    <scope>NUCLEOTIDE SEQUENCE [LARGE SCALE GENOMIC DNA]</scope>
    <scope>GENOME REANNOTATION</scope>
    <source>
        <strain>ATCC BAA-935 / AF2122/97</strain>
    </source>
</reference>
<comment type="subcellular location">
    <subcellularLocation>
        <location evidence="1">Cell membrane</location>
        <topology evidence="1">Lipid-anchor</topology>
    </subcellularLocation>
</comment>